<organism>
    <name type="scientific">Dictyostelium discoideum</name>
    <name type="common">Social amoeba</name>
    <dbReference type="NCBI Taxonomy" id="44689"/>
    <lineage>
        <taxon>Eukaryota</taxon>
        <taxon>Amoebozoa</taxon>
        <taxon>Evosea</taxon>
        <taxon>Eumycetozoa</taxon>
        <taxon>Dictyostelia</taxon>
        <taxon>Dictyosteliales</taxon>
        <taxon>Dictyosteliaceae</taxon>
        <taxon>Dictyostelium</taxon>
    </lineage>
</organism>
<accession>Q54LY8</accession>
<protein>
    <recommendedName>
        <fullName>Uncharacterized protein DDB_G0286299</fullName>
    </recommendedName>
</protein>
<feature type="chain" id="PRO_0000348505" description="Uncharacterized protein DDB_G0286299">
    <location>
        <begin position="1"/>
        <end position="451"/>
    </location>
</feature>
<feature type="region of interest" description="Disordered" evidence="1">
    <location>
        <begin position="1"/>
        <end position="451"/>
    </location>
</feature>
<feature type="compositionally biased region" description="Low complexity" evidence="1">
    <location>
        <begin position="9"/>
        <end position="22"/>
    </location>
</feature>
<feature type="compositionally biased region" description="Polar residues" evidence="1">
    <location>
        <begin position="44"/>
        <end position="54"/>
    </location>
</feature>
<feature type="compositionally biased region" description="Basic and acidic residues" evidence="1">
    <location>
        <begin position="73"/>
        <end position="99"/>
    </location>
</feature>
<feature type="compositionally biased region" description="Acidic residues" evidence="1">
    <location>
        <begin position="114"/>
        <end position="147"/>
    </location>
</feature>
<feature type="compositionally biased region" description="Basic residues" evidence="1">
    <location>
        <begin position="152"/>
        <end position="162"/>
    </location>
</feature>
<feature type="compositionally biased region" description="Basic and acidic residues" evidence="1">
    <location>
        <begin position="163"/>
        <end position="192"/>
    </location>
</feature>
<feature type="compositionally biased region" description="Basic and acidic residues" evidence="1">
    <location>
        <begin position="199"/>
        <end position="210"/>
    </location>
</feature>
<feature type="compositionally biased region" description="Basic and acidic residues" evidence="1">
    <location>
        <begin position="217"/>
        <end position="230"/>
    </location>
</feature>
<feature type="compositionally biased region" description="Low complexity" evidence="1">
    <location>
        <begin position="232"/>
        <end position="244"/>
    </location>
</feature>
<feature type="compositionally biased region" description="Basic and acidic residues" evidence="1">
    <location>
        <begin position="284"/>
        <end position="303"/>
    </location>
</feature>
<feature type="compositionally biased region" description="Basic and acidic residues" evidence="1">
    <location>
        <begin position="311"/>
        <end position="340"/>
    </location>
</feature>
<feature type="compositionally biased region" description="Low complexity" evidence="1">
    <location>
        <begin position="341"/>
        <end position="355"/>
    </location>
</feature>
<feature type="compositionally biased region" description="Basic and acidic residues" evidence="1">
    <location>
        <begin position="356"/>
        <end position="383"/>
    </location>
</feature>
<feature type="compositionally biased region" description="Low complexity" evidence="1">
    <location>
        <begin position="393"/>
        <end position="425"/>
    </location>
</feature>
<feature type="compositionally biased region" description="Basic and acidic residues" evidence="1">
    <location>
        <begin position="441"/>
        <end position="451"/>
    </location>
</feature>
<gene>
    <name type="ORF">DDB_G0286299</name>
</gene>
<dbReference type="EMBL" id="AAFI02000085">
    <property type="protein sequence ID" value="EAL64325.1"/>
    <property type="molecule type" value="Genomic_DNA"/>
</dbReference>
<dbReference type="RefSeq" id="XP_637843.1">
    <property type="nucleotide sequence ID" value="XM_632751.1"/>
</dbReference>
<dbReference type="GlyGen" id="Q54LY8">
    <property type="glycosylation" value="1 site"/>
</dbReference>
<dbReference type="PaxDb" id="44689-DDB0186915"/>
<dbReference type="EnsemblProtists" id="EAL64325">
    <property type="protein sequence ID" value="EAL64325"/>
    <property type="gene ID" value="DDB_G0286299"/>
</dbReference>
<dbReference type="GeneID" id="8625557"/>
<dbReference type="KEGG" id="ddi:DDB_G0286299"/>
<dbReference type="dictyBase" id="DDB_G0286299"/>
<dbReference type="VEuPathDB" id="AmoebaDB:DDB_G0286299"/>
<dbReference type="HOGENOM" id="CLU_607536_0_0_1"/>
<dbReference type="InParanoid" id="Q54LY8"/>
<dbReference type="OMA" id="GCSHITN"/>
<dbReference type="PRO" id="PR:Q54LY8"/>
<dbReference type="Proteomes" id="UP000002195">
    <property type="component" value="Chromosome 4"/>
</dbReference>
<proteinExistence type="predicted"/>
<keyword id="KW-1185">Reference proteome</keyword>
<evidence type="ECO:0000256" key="1">
    <source>
        <dbReference type="SAM" id="MobiDB-lite"/>
    </source>
</evidence>
<reference key="1">
    <citation type="journal article" date="2005" name="Nature">
        <title>The genome of the social amoeba Dictyostelium discoideum.</title>
        <authorList>
            <person name="Eichinger L."/>
            <person name="Pachebat J.A."/>
            <person name="Gloeckner G."/>
            <person name="Rajandream M.A."/>
            <person name="Sucgang R."/>
            <person name="Berriman M."/>
            <person name="Song J."/>
            <person name="Olsen R."/>
            <person name="Szafranski K."/>
            <person name="Xu Q."/>
            <person name="Tunggal B."/>
            <person name="Kummerfeld S."/>
            <person name="Madera M."/>
            <person name="Konfortov B.A."/>
            <person name="Rivero F."/>
            <person name="Bankier A.T."/>
            <person name="Lehmann R."/>
            <person name="Hamlin N."/>
            <person name="Davies R."/>
            <person name="Gaudet P."/>
            <person name="Fey P."/>
            <person name="Pilcher K."/>
            <person name="Chen G."/>
            <person name="Saunders D."/>
            <person name="Sodergren E.J."/>
            <person name="Davis P."/>
            <person name="Kerhornou A."/>
            <person name="Nie X."/>
            <person name="Hall N."/>
            <person name="Anjard C."/>
            <person name="Hemphill L."/>
            <person name="Bason N."/>
            <person name="Farbrother P."/>
            <person name="Desany B."/>
            <person name="Just E."/>
            <person name="Morio T."/>
            <person name="Rost R."/>
            <person name="Churcher C.M."/>
            <person name="Cooper J."/>
            <person name="Haydock S."/>
            <person name="van Driessche N."/>
            <person name="Cronin A."/>
            <person name="Goodhead I."/>
            <person name="Muzny D.M."/>
            <person name="Mourier T."/>
            <person name="Pain A."/>
            <person name="Lu M."/>
            <person name="Harper D."/>
            <person name="Lindsay R."/>
            <person name="Hauser H."/>
            <person name="James K.D."/>
            <person name="Quiles M."/>
            <person name="Madan Babu M."/>
            <person name="Saito T."/>
            <person name="Buchrieser C."/>
            <person name="Wardroper A."/>
            <person name="Felder M."/>
            <person name="Thangavelu M."/>
            <person name="Johnson D."/>
            <person name="Knights A."/>
            <person name="Loulseged H."/>
            <person name="Mungall K.L."/>
            <person name="Oliver K."/>
            <person name="Price C."/>
            <person name="Quail M.A."/>
            <person name="Urushihara H."/>
            <person name="Hernandez J."/>
            <person name="Rabbinowitsch E."/>
            <person name="Steffen D."/>
            <person name="Sanders M."/>
            <person name="Ma J."/>
            <person name="Kohara Y."/>
            <person name="Sharp S."/>
            <person name="Simmonds M.N."/>
            <person name="Spiegler S."/>
            <person name="Tivey A."/>
            <person name="Sugano S."/>
            <person name="White B."/>
            <person name="Walker D."/>
            <person name="Woodward J.R."/>
            <person name="Winckler T."/>
            <person name="Tanaka Y."/>
            <person name="Shaulsky G."/>
            <person name="Schleicher M."/>
            <person name="Weinstock G.M."/>
            <person name="Rosenthal A."/>
            <person name="Cox E.C."/>
            <person name="Chisholm R.L."/>
            <person name="Gibbs R.A."/>
            <person name="Loomis W.F."/>
            <person name="Platzer M."/>
            <person name="Kay R.R."/>
            <person name="Williams J.G."/>
            <person name="Dear P.H."/>
            <person name="Noegel A.A."/>
            <person name="Barrell B.G."/>
            <person name="Kuspa A."/>
        </authorList>
    </citation>
    <scope>NUCLEOTIDE SEQUENCE [LARGE SCALE GENOMIC DNA]</scope>
    <source>
        <strain>AX4</strain>
    </source>
</reference>
<sequence>MSETENKTTTETPTTTDSTVTTKEVKVPKATSKGNDDYFFVKNVKNQLSNTRTRATVDRLAPTPPLSQAAKRKLIDTKERKEKKEKKEKEPKEPKEPKEKAKKKAKTEKKKDDGDEEEDEEKEEDEEQKEEQSQEEDSEESEEEQNSDEDKKKKKKQAKKVAKKETEPKKKEAKPKKEAKPKKETTKKEKEATTTSSDSTEKKEKEEKPKKEKKISKKDQAAAEKKKDGDDSTTTTATATTTTDDSTENKEEKKDKKTTKKPAAAEKKKVKKDGDDDETAAAATEEKKDEEKSEEKEKKETKKPAAPKKPAAAEKKKTAANPTDKKDGENKDVTPSDDKPAATTTTTTAAAATTTEEPKEKITKPAADKKKAPANKKAEKDQSSSDESANKETTTATTTTTNKDATAPTTTTNKDATAPTTTTTKDNVDEASVKKTANSAPKKEAAKNKSK</sequence>
<name>Y6915_DICDI</name>